<feature type="chain" id="PRO_0000085021" description="1,2-dihydroxynaphthalene dioxygenase">
    <location>
        <begin position="1"/>
        <end position="302"/>
    </location>
</feature>
<feature type="domain" description="VOC 1" evidence="2">
    <location>
        <begin position="9"/>
        <end position="124"/>
    </location>
</feature>
<feature type="domain" description="VOC 2" evidence="2">
    <location>
        <begin position="149"/>
        <end position="270"/>
    </location>
</feature>
<feature type="binding site" evidence="1">
    <location>
        <position position="152"/>
    </location>
    <ligand>
        <name>Fe cation</name>
        <dbReference type="ChEBI" id="CHEBI:24875"/>
    </ligand>
</feature>
<feature type="binding site" evidence="1">
    <location>
        <position position="152"/>
    </location>
    <ligand>
        <name>substrate</name>
    </ligand>
</feature>
<feature type="binding site" evidence="1">
    <location>
        <begin position="199"/>
        <end position="200"/>
    </location>
    <ligand>
        <name>substrate</name>
    </ligand>
</feature>
<feature type="binding site" evidence="1">
    <location>
        <position position="215"/>
    </location>
    <ligand>
        <name>Fe cation</name>
        <dbReference type="ChEBI" id="CHEBI:24875"/>
    </ligand>
</feature>
<feature type="binding site" evidence="1">
    <location>
        <position position="215"/>
    </location>
    <ligand>
        <name>substrate</name>
    </ligand>
</feature>
<feature type="binding site" evidence="1">
    <location>
        <position position="256"/>
    </location>
    <ligand>
        <name>substrate</name>
    </ligand>
</feature>
<feature type="binding site" evidence="1">
    <location>
        <position position="266"/>
    </location>
    <ligand>
        <name>Fe cation</name>
        <dbReference type="ChEBI" id="CHEBI:24875"/>
    </ligand>
</feature>
<gene>
    <name type="primary">nahC</name>
</gene>
<dbReference type="EC" id="1.13.11.56"/>
<dbReference type="EMBL" id="J04994">
    <property type="protein sequence ID" value="AAA91577.1"/>
    <property type="molecule type" value="Genomic_DNA"/>
</dbReference>
<dbReference type="PIR" id="A34343">
    <property type="entry name" value="A34343"/>
</dbReference>
<dbReference type="RefSeq" id="WP_011475381.1">
    <property type="nucleotide sequence ID" value="NC_007926.1"/>
</dbReference>
<dbReference type="RefSeq" id="YP_534826.1">
    <property type="nucleotide sequence ID" value="NC_007926.1"/>
</dbReference>
<dbReference type="SMR" id="P11861"/>
<dbReference type="KEGG" id="ag:AAA91577"/>
<dbReference type="UniPathway" id="UPA00082"/>
<dbReference type="GO" id="GO:0018554">
    <property type="term" value="F:1,2-dihydroxynaphthalene dioxygenase activity"/>
    <property type="evidence" value="ECO:0007669"/>
    <property type="project" value="UniProtKB-EC"/>
</dbReference>
<dbReference type="GO" id="GO:0008198">
    <property type="term" value="F:ferrous iron binding"/>
    <property type="evidence" value="ECO:0007669"/>
    <property type="project" value="InterPro"/>
</dbReference>
<dbReference type="GO" id="GO:0016702">
    <property type="term" value="F:oxidoreductase activity, acting on single donors with incorporation of molecular oxygen, incorporation of two atoms of oxygen"/>
    <property type="evidence" value="ECO:0000314"/>
    <property type="project" value="UniProtKB"/>
</dbReference>
<dbReference type="GO" id="GO:1901170">
    <property type="term" value="P:naphthalene catabolic process"/>
    <property type="evidence" value="ECO:0000314"/>
    <property type="project" value="UniProtKB"/>
</dbReference>
<dbReference type="CDD" id="cd07237">
    <property type="entry name" value="BphC1-RGP6_C_like"/>
    <property type="match status" value="1"/>
</dbReference>
<dbReference type="CDD" id="cd07252">
    <property type="entry name" value="BphC1-RGP6_N_like"/>
    <property type="match status" value="1"/>
</dbReference>
<dbReference type="FunFam" id="3.10.180.10:FF:000021">
    <property type="entry name" value="1,2-dihydroxynaphthalene dioxygenase"/>
    <property type="match status" value="1"/>
</dbReference>
<dbReference type="FunFam" id="3.10.180.10:FF:000027">
    <property type="entry name" value="1,2-dihydroxynaphthalene dioxygenase"/>
    <property type="match status" value="1"/>
</dbReference>
<dbReference type="Gene3D" id="3.10.180.10">
    <property type="entry name" value="2,3-Dihydroxybiphenyl 1,2-Dioxygenase, domain 1"/>
    <property type="match status" value="2"/>
</dbReference>
<dbReference type="InterPro" id="IPR029068">
    <property type="entry name" value="Glyas_Bleomycin-R_OHBP_Dase"/>
</dbReference>
<dbReference type="InterPro" id="IPR004360">
    <property type="entry name" value="Glyas_Fos-R_dOase_dom"/>
</dbReference>
<dbReference type="InterPro" id="IPR037523">
    <property type="entry name" value="VOC"/>
</dbReference>
<dbReference type="InterPro" id="IPR000486">
    <property type="entry name" value="Xdiol_ring_cleave_dOase_1/2"/>
</dbReference>
<dbReference type="Pfam" id="PF22632">
    <property type="entry name" value="BphC_D1"/>
    <property type="match status" value="1"/>
</dbReference>
<dbReference type="Pfam" id="PF00903">
    <property type="entry name" value="Glyoxalase"/>
    <property type="match status" value="1"/>
</dbReference>
<dbReference type="SUPFAM" id="SSF54593">
    <property type="entry name" value="Glyoxalase/Bleomycin resistance protein/Dihydroxybiphenyl dioxygenase"/>
    <property type="match status" value="1"/>
</dbReference>
<dbReference type="PROSITE" id="PS00082">
    <property type="entry name" value="EXTRADIOL_DIOXYGENAS"/>
    <property type="match status" value="1"/>
</dbReference>
<dbReference type="PROSITE" id="PS51819">
    <property type="entry name" value="VOC"/>
    <property type="match status" value="2"/>
</dbReference>
<organism>
    <name type="scientific">Pseudomonas putida</name>
    <name type="common">Arthrobacter siderocapsulatus</name>
    <dbReference type="NCBI Taxonomy" id="303"/>
    <lineage>
        <taxon>Bacteria</taxon>
        <taxon>Pseudomonadati</taxon>
        <taxon>Pseudomonadota</taxon>
        <taxon>Gammaproteobacteria</taxon>
        <taxon>Pseudomonadales</taxon>
        <taxon>Pseudomonadaceae</taxon>
        <taxon>Pseudomonas</taxon>
    </lineage>
</organism>
<sequence length="302" mass="33883">MSKQAAVIELGYMGISVKDPDAWKSFAMNMLGLQVLDEGEKDRFYLRMDYWHHRIVVHHSAEDDLEYLGWRVAGKPEFEALGQKLIDAGYKIRVCDKVEAQERMVLGLMKTEDPGGNPTEIFWGPRIDMSNPFHPGRPLHGKFVTGDQGLGHCIVRQTDVAAAHKFYSLLGFRGDVEYRIPLPNGMTAELSFMHCNARDHSIAFGAMPAAKRLNHLMLEYTHMEDLGYTHQQFVKNEIDIALQLGIHANDKALTFYGATPSGWLIEPGWRGATAIDEAEYYVGDIFGHGVEAPGYGLDVKLS</sequence>
<accession>P11861</accession>
<reference key="1">
    <citation type="journal article" date="1989" name="J. Biol. Chem.">
        <title>Bacterial aromatic ring-cleavage enzymes are classified into two different gene families.</title>
        <authorList>
            <person name="Harayama S."/>
            <person name="Rekik M."/>
        </authorList>
    </citation>
    <scope>NUCLEOTIDE SEQUENCE [GENOMIC DNA]</scope>
    <source>
        <strain>ATCC 17485 / DSM 50208 / JCM 6158 / NCIMB 12092 / Stanier 111 / Biotype A</strain>
    </source>
</reference>
<reference key="2">
    <citation type="journal article" date="1980" name="J. Bacteriol.">
        <title>Naphthalene metabolism by pseudomonads: purification and properties of 1,2-dihydroxynaphthalene oxygenase.</title>
        <authorList>
            <person name="Patel T.R."/>
            <person name="Barnsley E.A."/>
        </authorList>
    </citation>
    <scope>FUNCTION</scope>
    <scope>CATALYTIC ACTIVITY</scope>
    <scope>BIOPHYSICOCHEMICAL PROPERTIES</scope>
    <scope>SUBSTRATE SPECIFICITY</scope>
    <scope>COFACTOR</scope>
    <scope>ACTIVITY REGULATION</scope>
    <source>
        <strain>DSM 8368 / NCIMB 9816 / PG</strain>
    </source>
</reference>
<evidence type="ECO:0000250" key="1"/>
<evidence type="ECO:0000255" key="2">
    <source>
        <dbReference type="PROSITE-ProRule" id="PRU01163"/>
    </source>
</evidence>
<evidence type="ECO:0000269" key="3">
    <source>
    </source>
</evidence>
<evidence type="ECO:0000305" key="4"/>
<protein>
    <recommendedName>
        <fullName>1,2-dihydroxynaphthalene dioxygenase</fullName>
        <shortName>1,2-DHN dioxygenase</shortName>
        <shortName>DHNDO</shortName>
        <ecNumber>1.13.11.56</ecNumber>
    </recommendedName>
    <alternativeName>
        <fullName>1,2-dihydroxynaphthalene oxygenase</fullName>
    </alternativeName>
</protein>
<geneLocation type="plasmid">
    <name>NAH7</name>
</geneLocation>
<proteinExistence type="evidence at protein level"/>
<comment type="function">
    <text evidence="3">Involved in the naphthalene catabolic pathway. Catalyzes the meta-cleavage of 1,2-dihydroxynaphthalene (1,2-DHN) to yield 2-hydroxychromene-2-carboxylic acid. Can also cleave 3-methylcatechol and 4-methylcatechol.</text>
</comment>
<comment type="catalytic activity">
    <reaction evidence="3">
        <text>naphthalene-1,2-diol + O2 = 2-hydroxychromene-2-carboxylate + H(+)</text>
        <dbReference type="Rhea" id="RHEA:27310"/>
        <dbReference type="ChEBI" id="CHEBI:15378"/>
        <dbReference type="ChEBI" id="CHEBI:15379"/>
        <dbReference type="ChEBI" id="CHEBI:17435"/>
        <dbReference type="ChEBI" id="CHEBI:59350"/>
        <dbReference type="EC" id="1.13.11.56"/>
    </reaction>
</comment>
<comment type="cofactor">
    <cofactor evidence="3">
        <name>Fe(2+)</name>
        <dbReference type="ChEBI" id="CHEBI:29033"/>
    </cofactor>
</comment>
<comment type="activity regulation">
    <text evidence="3">Inhibited by bathophenanthroline sulfonate, o-phenanthroline, 8-hydroxyquinoline, 2,2'-dipyridyl and p-chlormercuribenzoate. Also inhibited by Hg(2+), Cu(2+), Co(2+) and Fe(3+) ions.</text>
</comment>
<comment type="biophysicochemical properties">
    <kinetics>
        <KM evidence="3">0.15 mM for 3-methylcatechol (at pH 5.5)</KM>
        <KM evidence="3">0.28 mM for 1,2-DHN (at pH 5.5)</KM>
    </kinetics>
    <phDependence>
        <text evidence="3">Optimum pH is 6.5.</text>
    </phDependence>
</comment>
<comment type="pathway">
    <text>Aromatic compound metabolism; naphthalene degradation.</text>
</comment>
<comment type="similarity">
    <text evidence="4">Belongs to the extradiol ring-cleavage dioxygenase family.</text>
</comment>
<keyword id="KW-0058">Aromatic hydrocarbons catabolism</keyword>
<keyword id="KW-0223">Dioxygenase</keyword>
<keyword id="KW-0408">Iron</keyword>
<keyword id="KW-0479">Metal-binding</keyword>
<keyword id="KW-0560">Oxidoreductase</keyword>
<keyword id="KW-0614">Plasmid</keyword>
<keyword id="KW-0677">Repeat</keyword>
<name>NAHC1_PSEPU</name>